<sequence>MKVAIYPGSFDPITNGHLDIIERASKMCDHLIVSVIHNPNKNPLFSLEERKLLIEECIGKYANVTVDCFSGLLMEYAKGKEATAIIKGLRAISDFEYELQMALMNQRLCPSIETVFLMTSTEYSFLSSSLIKEVAKFGGSIHGMVPANVYKAITNRF</sequence>
<reference key="1">
    <citation type="submission" date="2007-10" db="EMBL/GenBank/DDBJ databases">
        <title>Complete genome of Alkaliphilus oremlandii OhILAs.</title>
        <authorList>
            <person name="Copeland A."/>
            <person name="Lucas S."/>
            <person name="Lapidus A."/>
            <person name="Barry K."/>
            <person name="Detter J.C."/>
            <person name="Glavina del Rio T."/>
            <person name="Hammon N."/>
            <person name="Israni S."/>
            <person name="Dalin E."/>
            <person name="Tice H."/>
            <person name="Pitluck S."/>
            <person name="Chain P."/>
            <person name="Malfatti S."/>
            <person name="Shin M."/>
            <person name="Vergez L."/>
            <person name="Schmutz J."/>
            <person name="Larimer F."/>
            <person name="Land M."/>
            <person name="Hauser L."/>
            <person name="Kyrpides N."/>
            <person name="Mikhailova N."/>
            <person name="Stolz J.F."/>
            <person name="Dawson A."/>
            <person name="Fisher E."/>
            <person name="Crable B."/>
            <person name="Perera E."/>
            <person name="Lisak J."/>
            <person name="Ranganathan M."/>
            <person name="Basu P."/>
            <person name="Richardson P."/>
        </authorList>
    </citation>
    <scope>NUCLEOTIDE SEQUENCE [LARGE SCALE GENOMIC DNA]</scope>
    <source>
        <strain>OhILAs</strain>
    </source>
</reference>
<feature type="chain" id="PRO_1000058155" description="Phosphopantetheine adenylyltransferase">
    <location>
        <begin position="1"/>
        <end position="157"/>
    </location>
</feature>
<feature type="binding site" evidence="1">
    <location>
        <begin position="9"/>
        <end position="10"/>
    </location>
    <ligand>
        <name>ATP</name>
        <dbReference type="ChEBI" id="CHEBI:30616"/>
    </ligand>
</feature>
<feature type="binding site" evidence="1">
    <location>
        <position position="9"/>
    </location>
    <ligand>
        <name>substrate</name>
    </ligand>
</feature>
<feature type="binding site" evidence="1">
    <location>
        <position position="17"/>
    </location>
    <ligand>
        <name>ATP</name>
        <dbReference type="ChEBI" id="CHEBI:30616"/>
    </ligand>
</feature>
<feature type="binding site" evidence="1">
    <location>
        <position position="41"/>
    </location>
    <ligand>
        <name>substrate</name>
    </ligand>
</feature>
<feature type="binding site" evidence="1">
    <location>
        <position position="73"/>
    </location>
    <ligand>
        <name>substrate</name>
    </ligand>
</feature>
<feature type="binding site" evidence="1">
    <location>
        <position position="87"/>
    </location>
    <ligand>
        <name>substrate</name>
    </ligand>
</feature>
<feature type="binding site" evidence="1">
    <location>
        <begin position="88"/>
        <end position="90"/>
    </location>
    <ligand>
        <name>ATP</name>
        <dbReference type="ChEBI" id="CHEBI:30616"/>
    </ligand>
</feature>
<feature type="binding site" evidence="1">
    <location>
        <position position="98"/>
    </location>
    <ligand>
        <name>ATP</name>
        <dbReference type="ChEBI" id="CHEBI:30616"/>
    </ligand>
</feature>
<feature type="binding site" evidence="1">
    <location>
        <begin position="123"/>
        <end position="129"/>
    </location>
    <ligand>
        <name>ATP</name>
        <dbReference type="ChEBI" id="CHEBI:30616"/>
    </ligand>
</feature>
<feature type="site" description="Transition state stabilizer" evidence="1">
    <location>
        <position position="17"/>
    </location>
</feature>
<dbReference type="EC" id="2.7.7.3" evidence="1"/>
<dbReference type="EMBL" id="CP000853">
    <property type="protein sequence ID" value="ABW18987.1"/>
    <property type="molecule type" value="Genomic_DNA"/>
</dbReference>
<dbReference type="RefSeq" id="WP_012159299.1">
    <property type="nucleotide sequence ID" value="NC_009922.1"/>
</dbReference>
<dbReference type="SMR" id="A8MHA0"/>
<dbReference type="STRING" id="350688.Clos_1443"/>
<dbReference type="KEGG" id="aoe:Clos_1443"/>
<dbReference type="eggNOG" id="COG0669">
    <property type="taxonomic scope" value="Bacteria"/>
</dbReference>
<dbReference type="HOGENOM" id="CLU_100149_0_1_9"/>
<dbReference type="OrthoDB" id="9806661at2"/>
<dbReference type="UniPathway" id="UPA00241">
    <property type="reaction ID" value="UER00355"/>
</dbReference>
<dbReference type="Proteomes" id="UP000000269">
    <property type="component" value="Chromosome"/>
</dbReference>
<dbReference type="GO" id="GO:0005737">
    <property type="term" value="C:cytoplasm"/>
    <property type="evidence" value="ECO:0007669"/>
    <property type="project" value="UniProtKB-SubCell"/>
</dbReference>
<dbReference type="GO" id="GO:0005524">
    <property type="term" value="F:ATP binding"/>
    <property type="evidence" value="ECO:0007669"/>
    <property type="project" value="UniProtKB-KW"/>
</dbReference>
<dbReference type="GO" id="GO:0004595">
    <property type="term" value="F:pantetheine-phosphate adenylyltransferase activity"/>
    <property type="evidence" value="ECO:0007669"/>
    <property type="project" value="UniProtKB-UniRule"/>
</dbReference>
<dbReference type="GO" id="GO:0015937">
    <property type="term" value="P:coenzyme A biosynthetic process"/>
    <property type="evidence" value="ECO:0007669"/>
    <property type="project" value="UniProtKB-UniRule"/>
</dbReference>
<dbReference type="CDD" id="cd02163">
    <property type="entry name" value="PPAT"/>
    <property type="match status" value="1"/>
</dbReference>
<dbReference type="Gene3D" id="3.40.50.620">
    <property type="entry name" value="HUPs"/>
    <property type="match status" value="1"/>
</dbReference>
<dbReference type="HAMAP" id="MF_00151">
    <property type="entry name" value="PPAT_bact"/>
    <property type="match status" value="1"/>
</dbReference>
<dbReference type="InterPro" id="IPR004821">
    <property type="entry name" value="Cyt_trans-like"/>
</dbReference>
<dbReference type="InterPro" id="IPR001980">
    <property type="entry name" value="PPAT"/>
</dbReference>
<dbReference type="InterPro" id="IPR014729">
    <property type="entry name" value="Rossmann-like_a/b/a_fold"/>
</dbReference>
<dbReference type="NCBIfam" id="TIGR01510">
    <property type="entry name" value="coaD_prev_kdtB"/>
    <property type="match status" value="1"/>
</dbReference>
<dbReference type="NCBIfam" id="TIGR00125">
    <property type="entry name" value="cyt_tran_rel"/>
    <property type="match status" value="1"/>
</dbReference>
<dbReference type="PANTHER" id="PTHR21342">
    <property type="entry name" value="PHOSPHOPANTETHEINE ADENYLYLTRANSFERASE"/>
    <property type="match status" value="1"/>
</dbReference>
<dbReference type="PANTHER" id="PTHR21342:SF1">
    <property type="entry name" value="PHOSPHOPANTETHEINE ADENYLYLTRANSFERASE"/>
    <property type="match status" value="1"/>
</dbReference>
<dbReference type="Pfam" id="PF01467">
    <property type="entry name" value="CTP_transf_like"/>
    <property type="match status" value="1"/>
</dbReference>
<dbReference type="PRINTS" id="PR01020">
    <property type="entry name" value="LPSBIOSNTHSS"/>
</dbReference>
<dbReference type="SUPFAM" id="SSF52374">
    <property type="entry name" value="Nucleotidylyl transferase"/>
    <property type="match status" value="1"/>
</dbReference>
<evidence type="ECO:0000255" key="1">
    <source>
        <dbReference type="HAMAP-Rule" id="MF_00151"/>
    </source>
</evidence>
<accession>A8MHA0</accession>
<proteinExistence type="inferred from homology"/>
<organism>
    <name type="scientific">Alkaliphilus oremlandii (strain OhILAs)</name>
    <name type="common">Clostridium oremlandii (strain OhILAs)</name>
    <dbReference type="NCBI Taxonomy" id="350688"/>
    <lineage>
        <taxon>Bacteria</taxon>
        <taxon>Bacillati</taxon>
        <taxon>Bacillota</taxon>
        <taxon>Clostridia</taxon>
        <taxon>Peptostreptococcales</taxon>
        <taxon>Natronincolaceae</taxon>
        <taxon>Alkaliphilus</taxon>
    </lineage>
</organism>
<protein>
    <recommendedName>
        <fullName evidence="1">Phosphopantetheine adenylyltransferase</fullName>
        <ecNumber evidence="1">2.7.7.3</ecNumber>
    </recommendedName>
    <alternativeName>
        <fullName evidence="1">Dephospho-CoA pyrophosphorylase</fullName>
    </alternativeName>
    <alternativeName>
        <fullName evidence="1">Pantetheine-phosphate adenylyltransferase</fullName>
        <shortName evidence="1">PPAT</shortName>
    </alternativeName>
</protein>
<comment type="function">
    <text evidence="1">Reversibly transfers an adenylyl group from ATP to 4'-phosphopantetheine, yielding dephospho-CoA (dPCoA) and pyrophosphate.</text>
</comment>
<comment type="catalytic activity">
    <reaction evidence="1">
        <text>(R)-4'-phosphopantetheine + ATP + H(+) = 3'-dephospho-CoA + diphosphate</text>
        <dbReference type="Rhea" id="RHEA:19801"/>
        <dbReference type="ChEBI" id="CHEBI:15378"/>
        <dbReference type="ChEBI" id="CHEBI:30616"/>
        <dbReference type="ChEBI" id="CHEBI:33019"/>
        <dbReference type="ChEBI" id="CHEBI:57328"/>
        <dbReference type="ChEBI" id="CHEBI:61723"/>
        <dbReference type="EC" id="2.7.7.3"/>
    </reaction>
</comment>
<comment type="cofactor">
    <cofactor evidence="1">
        <name>Mg(2+)</name>
        <dbReference type="ChEBI" id="CHEBI:18420"/>
    </cofactor>
</comment>
<comment type="pathway">
    <text evidence="1">Cofactor biosynthesis; coenzyme A biosynthesis; CoA from (R)-pantothenate: step 4/5.</text>
</comment>
<comment type="subunit">
    <text evidence="1">Homohexamer.</text>
</comment>
<comment type="subcellular location">
    <subcellularLocation>
        <location evidence="1">Cytoplasm</location>
    </subcellularLocation>
</comment>
<comment type="similarity">
    <text evidence="1">Belongs to the bacterial CoaD family.</text>
</comment>
<name>COAD_ALKOO</name>
<keyword id="KW-0067">ATP-binding</keyword>
<keyword id="KW-0173">Coenzyme A biosynthesis</keyword>
<keyword id="KW-0963">Cytoplasm</keyword>
<keyword id="KW-0460">Magnesium</keyword>
<keyword id="KW-0547">Nucleotide-binding</keyword>
<keyword id="KW-0548">Nucleotidyltransferase</keyword>
<keyword id="KW-1185">Reference proteome</keyword>
<keyword id="KW-0808">Transferase</keyword>
<gene>
    <name evidence="1" type="primary">coaD</name>
    <name type="ordered locus">Clos_1443</name>
</gene>